<comment type="function">
    <text evidence="3">Spermidine-binding protein probably required for its uptake into cells. Binds spermidine with high affinity (KD=14.3 nM). Does not bind putrescine, cadaverine or spermine. Spermidine binding induces large inter-domain conformational changes. Implicated in induction of type 3 secretion systems (T3SS), which play a role in virulence.</text>
</comment>
<comment type="subcellular location">
    <subcellularLocation>
        <location evidence="2">Periplasm</location>
    </subcellularLocation>
</comment>
<comment type="disruption phenotype">
    <text evidence="3">Significant decrease in T3SS induction.</text>
</comment>
<comment type="similarity">
    <text evidence="2">Belongs to the bacterial solute-binding protein PotD/PotF family.</text>
</comment>
<keyword id="KW-0002">3D-structure</keyword>
<keyword id="KW-0574">Periplasm</keyword>
<keyword id="KW-1185">Reference proteome</keyword>
<keyword id="KW-0732">Signal</keyword>
<keyword id="KW-0813">Transport</keyword>
<keyword id="KW-0843">Virulence</keyword>
<reference key="1">
    <citation type="journal article" date="2000" name="Nature">
        <title>Complete genome sequence of Pseudomonas aeruginosa PAO1, an opportunistic pathogen.</title>
        <authorList>
            <person name="Stover C.K."/>
            <person name="Pham X.-Q.T."/>
            <person name="Erwin A.L."/>
            <person name="Mizoguchi S.D."/>
            <person name="Warrener P."/>
            <person name="Hickey M.J."/>
            <person name="Brinkman F.S.L."/>
            <person name="Hufnagle W.O."/>
            <person name="Kowalik D.J."/>
            <person name="Lagrou M."/>
            <person name="Garber R.L."/>
            <person name="Goltry L."/>
            <person name="Tolentino E."/>
            <person name="Westbrock-Wadman S."/>
            <person name="Yuan Y."/>
            <person name="Brody L.L."/>
            <person name="Coulter S.N."/>
            <person name="Folger K.R."/>
            <person name="Kas A."/>
            <person name="Larbig K."/>
            <person name="Lim R.M."/>
            <person name="Smith K.A."/>
            <person name="Spencer D.H."/>
            <person name="Wong G.K.-S."/>
            <person name="Wu Z."/>
            <person name="Paulsen I.T."/>
            <person name="Reizer J."/>
            <person name="Saier M.H. Jr."/>
            <person name="Hancock R.E.W."/>
            <person name="Lory S."/>
            <person name="Olson M.V."/>
        </authorList>
    </citation>
    <scope>NUCLEOTIDE SEQUENCE [LARGE SCALE GENOMIC DNA]</scope>
    <source>
        <strain>ATCC 15692 / DSM 22644 / CIP 104116 / JCM 14847 / LMG 12228 / 1C / PRS 101 / PAO1</strain>
    </source>
</reference>
<reference key="2">
    <citation type="journal article" date="2012" name="J. Mol. Biol.">
        <title>Structural basis of substrate binding specificity revealed by the crystal structures of polyamine receptors SpuD and SpuE from Pseudomonas aeruginosa.</title>
        <authorList>
            <person name="Wu D."/>
            <person name="Lim S.C."/>
            <person name="Dong Y."/>
            <person name="Wu J."/>
            <person name="Tao F."/>
            <person name="Zhou L."/>
            <person name="Zhang L.H."/>
            <person name="Song H."/>
        </authorList>
    </citation>
    <scope>X-RAY CRYSTALLOGRAPHY (2.00 ANGSTROMS) OF 28-362 OF APOPROTEIN AND IN COMPLEX WITH SPERMIDINE</scope>
    <scope>FUNCTION</scope>
    <scope>DISRUPTION PHENOTYPE</scope>
    <scope>MUTAGENESIS OF TRP-271</scope>
    <source>
        <strain>ATCC 15692 / DSM 22644 / CIP 104116 / JCM 14847 / LMG 12228 / 1C / PRS 101 / PAO1</strain>
    </source>
</reference>
<accession>Q9I6J0</accession>
<name>SPUE_PSEAE</name>
<protein>
    <recommendedName>
        <fullName>Spermidine-binding periplasmic protein SpuE</fullName>
    </recommendedName>
</protein>
<sequence>MQHSIGKTLLVAALATAIAGPVQAEKKSLHIYNWTDYIAPTTLKDFTKESGIDVSYDVFDSNETLEGKLVSGHSGYDIVVPSNNFLGKQIQAGAFQKLDKSKLPNWKNLDPALLKQLEVSDPGNQYAVPYLWGTNGIGYNVAKVKEVLGDQPIDSWAILFEPENMKKLAKCGVAFMDSGDEMLPAALNYLGLDPNTHDPKDYKKAEEVLTKVRPYVSYFHSSKYISDLANGNICVAFGYSGDVFQAAARAEEAGKGIDIQYVIPKEGANLWFDLMAIPADAKAADNAYAFIDYLLRPEVIAKVSDYVGYANAIPGARPLMDKSVSDSEEVYPPQAVLDKLYVSAVLPAKVLRLQTRTWTRIKTGK</sequence>
<dbReference type="EMBL" id="AE004091">
    <property type="protein sequence ID" value="AAG03690.1"/>
    <property type="molecule type" value="Genomic_DNA"/>
</dbReference>
<dbReference type="PIR" id="F83607">
    <property type="entry name" value="F83607"/>
</dbReference>
<dbReference type="RefSeq" id="NP_248992.1">
    <property type="nucleotide sequence ID" value="NC_002516.2"/>
</dbReference>
<dbReference type="RefSeq" id="WP_003084301.1">
    <property type="nucleotide sequence ID" value="NZ_QZGE01000016.1"/>
</dbReference>
<dbReference type="PDB" id="3TTL">
    <property type="method" value="X-ray"/>
    <property type="resolution" value="2.30 A"/>
    <property type="chains" value="A/B=28-362"/>
</dbReference>
<dbReference type="PDB" id="3TTN">
    <property type="method" value="X-ray"/>
    <property type="resolution" value="2.00 A"/>
    <property type="chains" value="A/B=28-362"/>
</dbReference>
<dbReference type="PDB" id="6IKM">
    <property type="method" value="X-ray"/>
    <property type="resolution" value="3.40 A"/>
    <property type="chains" value="A/B/C/D/E/F/G/H/I/J/K/L/M/N/O/P/Q/R=28-362"/>
</dbReference>
<dbReference type="PDBsum" id="3TTL"/>
<dbReference type="PDBsum" id="3TTN"/>
<dbReference type="PDBsum" id="6IKM"/>
<dbReference type="SMR" id="Q9I6J0"/>
<dbReference type="STRING" id="208964.PA0301"/>
<dbReference type="PaxDb" id="208964-PA0301"/>
<dbReference type="ABCD" id="Q9I6J0">
    <property type="antibodies" value="3 sequenced antibodies"/>
</dbReference>
<dbReference type="GeneID" id="877626"/>
<dbReference type="KEGG" id="pae:PA0301"/>
<dbReference type="PATRIC" id="fig|208964.12.peg.315"/>
<dbReference type="PseudoCAP" id="PA0301"/>
<dbReference type="HOGENOM" id="CLU_026974_1_4_6"/>
<dbReference type="InParanoid" id="Q9I6J0"/>
<dbReference type="OrthoDB" id="9769319at2"/>
<dbReference type="PhylomeDB" id="Q9I6J0"/>
<dbReference type="BioCyc" id="PAER208964:G1FZ6-303-MONOMER"/>
<dbReference type="EvolutionaryTrace" id="Q9I6J0"/>
<dbReference type="Proteomes" id="UP000002438">
    <property type="component" value="Chromosome"/>
</dbReference>
<dbReference type="GO" id="GO:0005615">
    <property type="term" value="C:extracellular space"/>
    <property type="evidence" value="ECO:0000314"/>
    <property type="project" value="PseudoCAP"/>
</dbReference>
<dbReference type="GO" id="GO:0042597">
    <property type="term" value="C:periplasmic space"/>
    <property type="evidence" value="ECO:0007669"/>
    <property type="project" value="UniProtKB-SubCell"/>
</dbReference>
<dbReference type="GO" id="GO:0019809">
    <property type="term" value="F:spermidine binding"/>
    <property type="evidence" value="ECO:0000314"/>
    <property type="project" value="PseudoCAP"/>
</dbReference>
<dbReference type="GO" id="GO:0015846">
    <property type="term" value="P:polyamine transport"/>
    <property type="evidence" value="ECO:0000315"/>
    <property type="project" value="PseudoCAP"/>
</dbReference>
<dbReference type="CDD" id="cd13659">
    <property type="entry name" value="PBP2_PotF"/>
    <property type="match status" value="1"/>
</dbReference>
<dbReference type="Gene3D" id="3.40.190.10">
    <property type="entry name" value="Periplasmic binding protein-like II"/>
    <property type="match status" value="2"/>
</dbReference>
<dbReference type="InterPro" id="IPR006059">
    <property type="entry name" value="SBP"/>
</dbReference>
<dbReference type="InterPro" id="IPR001188">
    <property type="entry name" value="Sperm_putr-bd"/>
</dbReference>
<dbReference type="PANTHER" id="PTHR30222:SF12">
    <property type="entry name" value="NORSPERMIDINE SENSOR"/>
    <property type="match status" value="1"/>
</dbReference>
<dbReference type="PANTHER" id="PTHR30222">
    <property type="entry name" value="SPERMIDINE/PUTRESCINE-BINDING PERIPLASMIC PROTEIN"/>
    <property type="match status" value="1"/>
</dbReference>
<dbReference type="Pfam" id="PF13416">
    <property type="entry name" value="SBP_bac_8"/>
    <property type="match status" value="1"/>
</dbReference>
<dbReference type="PIRSF" id="PIRSF019574">
    <property type="entry name" value="Periplasmic_polyamine_BP"/>
    <property type="match status" value="1"/>
</dbReference>
<dbReference type="PRINTS" id="PR00909">
    <property type="entry name" value="SPERMDNBNDNG"/>
</dbReference>
<dbReference type="SUPFAM" id="SSF53850">
    <property type="entry name" value="Periplasmic binding protein-like II"/>
    <property type="match status" value="1"/>
</dbReference>
<evidence type="ECO:0000255" key="1"/>
<evidence type="ECO:0000255" key="2">
    <source>
        <dbReference type="PIRNR" id="PIRNR019574"/>
    </source>
</evidence>
<evidence type="ECO:0000269" key="3">
    <source>
    </source>
</evidence>
<evidence type="ECO:0007829" key="4">
    <source>
        <dbReference type="PDB" id="3TTL"/>
    </source>
</evidence>
<evidence type="ECO:0007829" key="5">
    <source>
        <dbReference type="PDB" id="3TTN"/>
    </source>
</evidence>
<feature type="signal peptide" evidence="1">
    <location>
        <begin position="1"/>
        <end position="24"/>
    </location>
</feature>
<feature type="chain" id="PRO_0000431397" description="Spermidine-binding periplasmic protein SpuE" evidence="1">
    <location>
        <begin position="25"/>
        <end position="365"/>
    </location>
</feature>
<feature type="binding site" evidence="3">
    <location>
        <position position="35"/>
    </location>
    <ligand>
        <name>spermidine</name>
        <dbReference type="ChEBI" id="CHEBI:57834"/>
    </ligand>
</feature>
<feature type="binding site" evidence="3">
    <location>
        <position position="181"/>
    </location>
    <ligand>
        <name>spermidine</name>
        <dbReference type="ChEBI" id="CHEBI:57834"/>
    </ligand>
</feature>
<feature type="binding site" evidence="3">
    <location>
        <position position="242"/>
    </location>
    <ligand>
        <name>spermidine</name>
        <dbReference type="ChEBI" id="CHEBI:57834"/>
    </ligand>
</feature>
<feature type="binding site" evidence="3">
    <location>
        <position position="269"/>
    </location>
    <ligand>
        <name>spermidine</name>
        <dbReference type="ChEBI" id="CHEBI:57834"/>
    </ligand>
</feature>
<feature type="mutagenesis site" description="Increases affinity for putrescine (to KD=1.12 uM)." evidence="3">
    <original>W</original>
    <variation>F</variation>
    <location>
        <position position="271"/>
    </location>
</feature>
<feature type="strand" evidence="5">
    <location>
        <begin position="29"/>
        <end position="34"/>
    </location>
</feature>
<feature type="helix" evidence="5">
    <location>
        <begin position="42"/>
        <end position="50"/>
    </location>
</feature>
<feature type="strand" evidence="5">
    <location>
        <begin position="54"/>
        <end position="61"/>
    </location>
</feature>
<feature type="helix" evidence="5">
    <location>
        <begin position="62"/>
        <end position="70"/>
    </location>
</feature>
<feature type="strand" evidence="5">
    <location>
        <begin position="77"/>
        <end position="79"/>
    </location>
</feature>
<feature type="helix" evidence="5">
    <location>
        <begin position="83"/>
        <end position="91"/>
    </location>
</feature>
<feature type="helix" evidence="5">
    <location>
        <begin position="100"/>
        <end position="102"/>
    </location>
</feature>
<feature type="helix" evidence="5">
    <location>
        <begin position="104"/>
        <end position="108"/>
    </location>
</feature>
<feature type="helix" evidence="5">
    <location>
        <begin position="111"/>
        <end position="117"/>
    </location>
</feature>
<feature type="turn" evidence="5">
    <location>
        <begin position="118"/>
        <end position="120"/>
    </location>
</feature>
<feature type="helix" evidence="5">
    <location>
        <begin position="122"/>
        <end position="124"/>
    </location>
</feature>
<feature type="strand" evidence="5">
    <location>
        <begin position="126"/>
        <end position="140"/>
    </location>
</feature>
<feature type="helix" evidence="5">
    <location>
        <begin position="141"/>
        <end position="148"/>
    </location>
</feature>
<feature type="helix" evidence="5">
    <location>
        <begin position="157"/>
        <end position="160"/>
    </location>
</feature>
<feature type="helix" evidence="5">
    <location>
        <begin position="162"/>
        <end position="168"/>
    </location>
</feature>
<feature type="helix" evidence="5">
    <location>
        <begin position="169"/>
        <end position="171"/>
    </location>
</feature>
<feature type="strand" evidence="5">
    <location>
        <begin position="173"/>
        <end position="175"/>
    </location>
</feature>
<feature type="helix" evidence="5">
    <location>
        <begin position="179"/>
        <end position="189"/>
    </location>
</feature>
<feature type="helix" evidence="5">
    <location>
        <begin position="199"/>
        <end position="212"/>
    </location>
</feature>
<feature type="helix" evidence="5">
    <location>
        <begin position="213"/>
        <end position="215"/>
    </location>
</feature>
<feature type="strand" evidence="4">
    <location>
        <begin position="217"/>
        <end position="219"/>
    </location>
</feature>
<feature type="helix" evidence="5">
    <location>
        <begin position="224"/>
        <end position="229"/>
    </location>
</feature>
<feature type="strand" evidence="5">
    <location>
        <begin position="234"/>
        <end position="239"/>
    </location>
</feature>
<feature type="helix" evidence="5">
    <location>
        <begin position="240"/>
        <end position="253"/>
    </location>
</feature>
<feature type="strand" evidence="5">
    <location>
        <begin position="259"/>
        <end position="262"/>
    </location>
</feature>
<feature type="strand" evidence="5">
    <location>
        <begin position="269"/>
        <end position="276"/>
    </location>
</feature>
<feature type="helix" evidence="5">
    <location>
        <begin position="284"/>
        <end position="294"/>
    </location>
</feature>
<feature type="helix" evidence="5">
    <location>
        <begin position="297"/>
        <end position="307"/>
    </location>
</feature>
<feature type="strand" evidence="5">
    <location>
        <begin position="310"/>
        <end position="312"/>
    </location>
</feature>
<feature type="helix" evidence="5">
    <location>
        <begin position="314"/>
        <end position="319"/>
    </location>
</feature>
<feature type="helix" evidence="5">
    <location>
        <begin position="322"/>
        <end position="325"/>
    </location>
</feature>
<feature type="turn" evidence="5">
    <location>
        <begin position="328"/>
        <end position="330"/>
    </location>
</feature>
<feature type="helix" evidence="5">
    <location>
        <begin position="334"/>
        <end position="337"/>
    </location>
</feature>
<feature type="helix" evidence="5">
    <location>
        <begin position="348"/>
        <end position="361"/>
    </location>
</feature>
<organism>
    <name type="scientific">Pseudomonas aeruginosa (strain ATCC 15692 / DSM 22644 / CIP 104116 / JCM 14847 / LMG 12228 / 1C / PRS 101 / PAO1)</name>
    <dbReference type="NCBI Taxonomy" id="208964"/>
    <lineage>
        <taxon>Bacteria</taxon>
        <taxon>Pseudomonadati</taxon>
        <taxon>Pseudomonadota</taxon>
        <taxon>Gammaproteobacteria</taxon>
        <taxon>Pseudomonadales</taxon>
        <taxon>Pseudomonadaceae</taxon>
        <taxon>Pseudomonas</taxon>
    </lineage>
</organism>
<gene>
    <name type="primary">spuE</name>
    <name type="ordered locus">PA0301</name>
</gene>
<proteinExistence type="evidence at protein level"/>